<protein>
    <recommendedName>
        <fullName>6-phosphogluconate dehydrogenase, decarboxylating</fullName>
        <ecNumber>1.1.1.44</ecNumber>
    </recommendedName>
</protein>
<evidence type="ECO:0000250" key="1"/>
<evidence type="ECO:0000305" key="2"/>
<organism>
    <name type="scientific">Shigella sonnei</name>
    <dbReference type="NCBI Taxonomy" id="624"/>
    <lineage>
        <taxon>Bacteria</taxon>
        <taxon>Pseudomonadati</taxon>
        <taxon>Pseudomonadota</taxon>
        <taxon>Gammaproteobacteria</taxon>
        <taxon>Enterobacterales</taxon>
        <taxon>Enterobacteriaceae</taxon>
        <taxon>Shigella</taxon>
    </lineage>
</organism>
<name>6PGD_SHISO</name>
<proteinExistence type="inferred from homology"/>
<gene>
    <name type="primary">gnd</name>
</gene>
<accession>P41580</accession>
<keyword id="KW-0311">Gluconate utilization</keyword>
<keyword id="KW-0521">NADP</keyword>
<keyword id="KW-0560">Oxidoreductase</keyword>
<keyword id="KW-0570">Pentose shunt</keyword>
<sequence>AVMGRNLALNIESRGYTVSIFNRSREKTEEVIAENPGKKLVPYYTVKEFVESLETPRRILLMVKAGAGTDAAIDSLKPYLDKGDIIIDGGNTFFQDTIRRNRELSAEGFNFIGTGVSGGEEGALKGPSIMPGGQKEAYELVAPILTKIAAVAEDGEPCVTYIGADGAGHYVKMVHNGIEYGDMQLIAEAYSLLKGGLNLSNEELAQTFTEWNNGELSSYLIDITKDIFTKKDEDGNYLVDVILDEAANKGTGKWTSQSALDLGEPLSLITESVFARYISSLKDQRVAASKVLSGPQAQSAGDKAEFIEKVRRALYLGKIVSYAQGFSQLRAASEEYNWDLNYGEIAKIFRAGCIIRAQFLQKITDAYAENPQIANLLLAPYFKQIADDYQQALRDVVAYAVQNGIPVPTFAAAVAYYDSYRAAVLPANLIQAQRDYFGAHTYKRI</sequence>
<feature type="chain" id="PRO_0000090051" description="6-phosphogluconate dehydrogenase, decarboxylating">
    <location>
        <begin position="1" status="less than"/>
        <end position="445" status="greater than"/>
    </location>
</feature>
<feature type="active site" description="Proton acceptor" evidence="1">
    <location>
        <position position="172"/>
    </location>
</feature>
<feature type="active site" description="Proton donor" evidence="1">
    <location>
        <position position="179"/>
    </location>
</feature>
<feature type="binding site" evidence="1">
    <location>
        <begin position="1"/>
        <end position="4"/>
    </location>
    <ligand>
        <name>NADP(+)</name>
        <dbReference type="ChEBI" id="CHEBI:58349"/>
    </ligand>
</feature>
<feature type="binding site" evidence="1">
    <location>
        <begin position="22"/>
        <end position="24"/>
    </location>
    <ligand>
        <name>NADP(+)</name>
        <dbReference type="ChEBI" id="CHEBI:58349"/>
    </ligand>
</feature>
<feature type="binding site" evidence="1">
    <location>
        <begin position="63"/>
        <end position="65"/>
    </location>
    <ligand>
        <name>NADP(+)</name>
        <dbReference type="ChEBI" id="CHEBI:58349"/>
    </ligand>
</feature>
<feature type="binding site" evidence="1">
    <location>
        <position position="91"/>
    </location>
    <ligand>
        <name>NADP(+)</name>
        <dbReference type="ChEBI" id="CHEBI:58349"/>
    </ligand>
</feature>
<feature type="binding site" description="in other chain" evidence="1">
    <location>
        <position position="91"/>
    </location>
    <ligand>
        <name>substrate</name>
        <note>ligand shared between dimeric partners</note>
    </ligand>
</feature>
<feature type="binding site" description="in other chain" evidence="1">
    <location>
        <begin position="117"/>
        <end position="119"/>
    </location>
    <ligand>
        <name>substrate</name>
        <note>ligand shared between dimeric partners</note>
    </ligand>
</feature>
<feature type="binding site" description="in other chain" evidence="1">
    <location>
        <begin position="175"/>
        <end position="176"/>
    </location>
    <ligand>
        <name>substrate</name>
        <note>ligand shared between dimeric partners</note>
    </ligand>
</feature>
<feature type="binding site" description="in other chain" evidence="1">
    <location>
        <position position="180"/>
    </location>
    <ligand>
        <name>substrate</name>
        <note>ligand shared between dimeric partners</note>
    </ligand>
</feature>
<feature type="binding site" description="in other chain" evidence="1">
    <location>
        <position position="249"/>
    </location>
    <ligand>
        <name>substrate</name>
        <note>ligand shared between dimeric partners</note>
    </ligand>
</feature>
<feature type="binding site" description="in other chain" evidence="1">
    <location>
        <position position="276"/>
    </location>
    <ligand>
        <name>substrate</name>
        <note>ligand shared between dimeric partners</note>
    </ligand>
</feature>
<feature type="binding site" evidence="1">
    <location>
        <position position="434"/>
    </location>
    <ligand>
        <name>substrate</name>
        <note>ligand shared between dimeric partners</note>
    </ligand>
</feature>
<feature type="binding site" evidence="1">
    <location>
        <position position="440"/>
    </location>
    <ligand>
        <name>substrate</name>
        <note>ligand shared between dimeric partners</note>
    </ligand>
</feature>
<feature type="non-terminal residue">
    <location>
        <position position="1"/>
    </location>
</feature>
<feature type="non-terminal residue">
    <location>
        <position position="445"/>
    </location>
</feature>
<dbReference type="EC" id="1.1.1.44"/>
<dbReference type="EMBL" id="U14470">
    <property type="protein sequence ID" value="AAC43835.1"/>
    <property type="molecule type" value="Genomic_DNA"/>
</dbReference>
<dbReference type="EMBL" id="U14440">
    <property type="protein sequence ID" value="AAC43790.1"/>
    <property type="molecule type" value="Genomic_DNA"/>
</dbReference>
<dbReference type="SMR" id="P41580"/>
<dbReference type="STRING" id="216599.GCA_000283715_02386"/>
<dbReference type="UniPathway" id="UPA00115">
    <property type="reaction ID" value="UER00410"/>
</dbReference>
<dbReference type="GO" id="GO:0050661">
    <property type="term" value="F:NADP binding"/>
    <property type="evidence" value="ECO:0007669"/>
    <property type="project" value="InterPro"/>
</dbReference>
<dbReference type="GO" id="GO:0004616">
    <property type="term" value="F:phosphogluconate dehydrogenase (decarboxylating) activity"/>
    <property type="evidence" value="ECO:0000250"/>
    <property type="project" value="UniProtKB"/>
</dbReference>
<dbReference type="GO" id="GO:0019521">
    <property type="term" value="P:D-gluconate metabolic process"/>
    <property type="evidence" value="ECO:0007669"/>
    <property type="project" value="UniProtKB-KW"/>
</dbReference>
<dbReference type="GO" id="GO:0016054">
    <property type="term" value="P:organic acid catabolic process"/>
    <property type="evidence" value="ECO:0007669"/>
    <property type="project" value="UniProtKB-ARBA"/>
</dbReference>
<dbReference type="GO" id="GO:0006098">
    <property type="term" value="P:pentose-phosphate shunt"/>
    <property type="evidence" value="ECO:0000250"/>
    <property type="project" value="UniProtKB"/>
</dbReference>
<dbReference type="FunFam" id="1.10.1040.10:FF:000002">
    <property type="entry name" value="6-phosphogluconate dehydrogenase, decarboxylating"/>
    <property type="match status" value="1"/>
</dbReference>
<dbReference type="FunFam" id="3.40.50.720:FF:000007">
    <property type="entry name" value="6-phosphogluconate dehydrogenase, decarboxylating"/>
    <property type="match status" value="1"/>
</dbReference>
<dbReference type="Gene3D" id="1.20.5.320">
    <property type="entry name" value="6-Phosphogluconate Dehydrogenase, domain 3"/>
    <property type="match status" value="1"/>
</dbReference>
<dbReference type="Gene3D" id="1.10.1040.10">
    <property type="entry name" value="N-(1-d-carboxylethyl)-l-norvaline Dehydrogenase, domain 2"/>
    <property type="match status" value="1"/>
</dbReference>
<dbReference type="Gene3D" id="3.40.50.720">
    <property type="entry name" value="NAD(P)-binding Rossmann-like Domain"/>
    <property type="match status" value="1"/>
</dbReference>
<dbReference type="InterPro" id="IPR008927">
    <property type="entry name" value="6-PGluconate_DH-like_C_sf"/>
</dbReference>
<dbReference type="InterPro" id="IPR013328">
    <property type="entry name" value="6PGD_dom2"/>
</dbReference>
<dbReference type="InterPro" id="IPR006114">
    <property type="entry name" value="6PGDH_C"/>
</dbReference>
<dbReference type="InterPro" id="IPR006113">
    <property type="entry name" value="6PGDH_Gnd/GntZ"/>
</dbReference>
<dbReference type="InterPro" id="IPR006115">
    <property type="entry name" value="6PGDH_NADP-bd"/>
</dbReference>
<dbReference type="InterPro" id="IPR006184">
    <property type="entry name" value="6PGdom_BS"/>
</dbReference>
<dbReference type="InterPro" id="IPR036291">
    <property type="entry name" value="NAD(P)-bd_dom_sf"/>
</dbReference>
<dbReference type="InterPro" id="IPR006183">
    <property type="entry name" value="Pgluconate_DH"/>
</dbReference>
<dbReference type="NCBIfam" id="TIGR00873">
    <property type="entry name" value="gnd"/>
    <property type="match status" value="1"/>
</dbReference>
<dbReference type="NCBIfam" id="NF006765">
    <property type="entry name" value="PRK09287.1"/>
    <property type="match status" value="1"/>
</dbReference>
<dbReference type="PANTHER" id="PTHR11811">
    <property type="entry name" value="6-PHOSPHOGLUCONATE DEHYDROGENASE"/>
    <property type="match status" value="1"/>
</dbReference>
<dbReference type="Pfam" id="PF00393">
    <property type="entry name" value="6PGD"/>
    <property type="match status" value="1"/>
</dbReference>
<dbReference type="Pfam" id="PF03446">
    <property type="entry name" value="NAD_binding_2"/>
    <property type="match status" value="1"/>
</dbReference>
<dbReference type="PIRSF" id="PIRSF000109">
    <property type="entry name" value="6PGD"/>
    <property type="match status" value="1"/>
</dbReference>
<dbReference type="PRINTS" id="PR00076">
    <property type="entry name" value="6PGDHDRGNASE"/>
</dbReference>
<dbReference type="SMART" id="SM01350">
    <property type="entry name" value="6PGD"/>
    <property type="match status" value="1"/>
</dbReference>
<dbReference type="SUPFAM" id="SSF48179">
    <property type="entry name" value="6-phosphogluconate dehydrogenase C-terminal domain-like"/>
    <property type="match status" value="1"/>
</dbReference>
<dbReference type="SUPFAM" id="SSF51735">
    <property type="entry name" value="NAD(P)-binding Rossmann-fold domains"/>
    <property type="match status" value="1"/>
</dbReference>
<dbReference type="PROSITE" id="PS00461">
    <property type="entry name" value="6PGD"/>
    <property type="match status" value="1"/>
</dbReference>
<reference key="1">
    <citation type="journal article" date="1994" name="Proc. Natl. Acad. Sci. U.S.A.">
        <title>Intergeneric transfer and recombination of the 6-phosphogluconate dehydrogenase gene (gnd) in enteric bacteria.</title>
        <authorList>
            <person name="Nelson K."/>
            <person name="Selander R.K."/>
        </authorList>
    </citation>
    <scope>NUCLEOTIDE SEQUENCE [GENOMIC DNA]</scope>
    <source>
        <strain>ATCC 29930 / DSM 5570 / NCTC 12984</strain>
    </source>
</reference>
<comment type="function">
    <text evidence="1">Catalyzes the oxidative decarboxylation of 6-phosphogluconate to ribulose 5-phosphate and CO(2), with concomitant reduction of NADP to NADPH.</text>
</comment>
<comment type="catalytic activity">
    <reaction>
        <text>6-phospho-D-gluconate + NADP(+) = D-ribulose 5-phosphate + CO2 + NADPH</text>
        <dbReference type="Rhea" id="RHEA:10116"/>
        <dbReference type="ChEBI" id="CHEBI:16526"/>
        <dbReference type="ChEBI" id="CHEBI:57783"/>
        <dbReference type="ChEBI" id="CHEBI:58121"/>
        <dbReference type="ChEBI" id="CHEBI:58349"/>
        <dbReference type="ChEBI" id="CHEBI:58759"/>
        <dbReference type="EC" id="1.1.1.44"/>
    </reaction>
</comment>
<comment type="pathway">
    <text>Carbohydrate degradation; pentose phosphate pathway; D-ribulose 5-phosphate from D-glucose 6-phosphate (oxidative stage): step 3/3.</text>
</comment>
<comment type="subunit">
    <text evidence="1">Homodimer.</text>
</comment>
<comment type="similarity">
    <text evidence="2">Belongs to the 6-phosphogluconate dehydrogenase family.</text>
</comment>